<evidence type="ECO:0000255" key="1">
    <source>
        <dbReference type="HAMAP-Rule" id="MF_00211"/>
    </source>
</evidence>
<dbReference type="EC" id="2.4.2.18" evidence="1"/>
<dbReference type="EMBL" id="CR628337">
    <property type="protein sequence ID" value="CAH15099.1"/>
    <property type="molecule type" value="Genomic_DNA"/>
</dbReference>
<dbReference type="RefSeq" id="WP_011215022.1">
    <property type="nucleotide sequence ID" value="NC_006369.1"/>
</dbReference>
<dbReference type="SMR" id="Q5WY74"/>
<dbReference type="KEGG" id="lpf:lpl0865"/>
<dbReference type="LegioList" id="lpl0865"/>
<dbReference type="HOGENOM" id="CLU_034315_2_1_6"/>
<dbReference type="UniPathway" id="UPA00035">
    <property type="reaction ID" value="UER00041"/>
</dbReference>
<dbReference type="Proteomes" id="UP000002517">
    <property type="component" value="Chromosome"/>
</dbReference>
<dbReference type="GO" id="GO:0005829">
    <property type="term" value="C:cytosol"/>
    <property type="evidence" value="ECO:0007669"/>
    <property type="project" value="TreeGrafter"/>
</dbReference>
<dbReference type="GO" id="GO:0004048">
    <property type="term" value="F:anthranilate phosphoribosyltransferase activity"/>
    <property type="evidence" value="ECO:0007669"/>
    <property type="project" value="UniProtKB-UniRule"/>
</dbReference>
<dbReference type="GO" id="GO:0000287">
    <property type="term" value="F:magnesium ion binding"/>
    <property type="evidence" value="ECO:0007669"/>
    <property type="project" value="UniProtKB-UniRule"/>
</dbReference>
<dbReference type="GO" id="GO:0000162">
    <property type="term" value="P:L-tryptophan biosynthetic process"/>
    <property type="evidence" value="ECO:0007669"/>
    <property type="project" value="UniProtKB-UniRule"/>
</dbReference>
<dbReference type="FunFam" id="3.40.1030.10:FF:000002">
    <property type="entry name" value="Anthranilate phosphoribosyltransferase"/>
    <property type="match status" value="1"/>
</dbReference>
<dbReference type="Gene3D" id="3.40.1030.10">
    <property type="entry name" value="Nucleoside phosphorylase/phosphoribosyltransferase catalytic domain"/>
    <property type="match status" value="1"/>
</dbReference>
<dbReference type="Gene3D" id="1.20.970.10">
    <property type="entry name" value="Transferase, Pyrimidine Nucleoside Phosphorylase, Chain C"/>
    <property type="match status" value="1"/>
</dbReference>
<dbReference type="HAMAP" id="MF_00211">
    <property type="entry name" value="TrpD"/>
    <property type="match status" value="1"/>
</dbReference>
<dbReference type="InterPro" id="IPR005940">
    <property type="entry name" value="Anthranilate_Pribosyl_Tfrase"/>
</dbReference>
<dbReference type="InterPro" id="IPR000312">
    <property type="entry name" value="Glycosyl_Trfase_fam3"/>
</dbReference>
<dbReference type="InterPro" id="IPR017459">
    <property type="entry name" value="Glycosyl_Trfase_fam3_N_dom"/>
</dbReference>
<dbReference type="InterPro" id="IPR036320">
    <property type="entry name" value="Glycosyl_Trfase_fam3_N_dom_sf"/>
</dbReference>
<dbReference type="InterPro" id="IPR035902">
    <property type="entry name" value="Nuc_phospho_transferase"/>
</dbReference>
<dbReference type="NCBIfam" id="TIGR01245">
    <property type="entry name" value="trpD"/>
    <property type="match status" value="1"/>
</dbReference>
<dbReference type="PANTHER" id="PTHR43285">
    <property type="entry name" value="ANTHRANILATE PHOSPHORIBOSYLTRANSFERASE"/>
    <property type="match status" value="1"/>
</dbReference>
<dbReference type="PANTHER" id="PTHR43285:SF2">
    <property type="entry name" value="ANTHRANILATE PHOSPHORIBOSYLTRANSFERASE"/>
    <property type="match status" value="1"/>
</dbReference>
<dbReference type="Pfam" id="PF02885">
    <property type="entry name" value="Glycos_trans_3N"/>
    <property type="match status" value="1"/>
</dbReference>
<dbReference type="Pfam" id="PF00591">
    <property type="entry name" value="Glycos_transf_3"/>
    <property type="match status" value="1"/>
</dbReference>
<dbReference type="SUPFAM" id="SSF52418">
    <property type="entry name" value="Nucleoside phosphorylase/phosphoribosyltransferase catalytic domain"/>
    <property type="match status" value="1"/>
</dbReference>
<dbReference type="SUPFAM" id="SSF47648">
    <property type="entry name" value="Nucleoside phosphorylase/phosphoribosyltransferase N-terminal domain"/>
    <property type="match status" value="1"/>
</dbReference>
<organism>
    <name type="scientific">Legionella pneumophila (strain Lens)</name>
    <dbReference type="NCBI Taxonomy" id="297245"/>
    <lineage>
        <taxon>Bacteria</taxon>
        <taxon>Pseudomonadati</taxon>
        <taxon>Pseudomonadota</taxon>
        <taxon>Gammaproteobacteria</taxon>
        <taxon>Legionellales</taxon>
        <taxon>Legionellaceae</taxon>
        <taxon>Legionella</taxon>
    </lineage>
</organism>
<reference key="1">
    <citation type="journal article" date="2004" name="Nat. Genet.">
        <title>Evidence in the Legionella pneumophila genome for exploitation of host cell functions and high genome plasticity.</title>
        <authorList>
            <person name="Cazalet C."/>
            <person name="Rusniok C."/>
            <person name="Brueggemann H."/>
            <person name="Zidane N."/>
            <person name="Magnier A."/>
            <person name="Ma L."/>
            <person name="Tichit M."/>
            <person name="Jarraud S."/>
            <person name="Bouchier C."/>
            <person name="Vandenesch F."/>
            <person name="Kunst F."/>
            <person name="Etienne J."/>
            <person name="Glaser P."/>
            <person name="Buchrieser C."/>
        </authorList>
    </citation>
    <scope>NUCLEOTIDE SEQUENCE [LARGE SCALE GENOMIC DNA]</scope>
    <source>
        <strain>Lens</strain>
    </source>
</reference>
<keyword id="KW-0028">Amino-acid biosynthesis</keyword>
<keyword id="KW-0057">Aromatic amino acid biosynthesis</keyword>
<keyword id="KW-0328">Glycosyltransferase</keyword>
<keyword id="KW-0460">Magnesium</keyword>
<keyword id="KW-0479">Metal-binding</keyword>
<keyword id="KW-0808">Transferase</keyword>
<keyword id="KW-0822">Tryptophan biosynthesis</keyword>
<name>TRPD_LEGPL</name>
<feature type="chain" id="PRO_0000227164" description="Anthranilate phosphoribosyltransferase">
    <location>
        <begin position="1"/>
        <end position="344"/>
    </location>
</feature>
<feature type="binding site" evidence="1">
    <location>
        <position position="80"/>
    </location>
    <ligand>
        <name>5-phospho-alpha-D-ribose 1-diphosphate</name>
        <dbReference type="ChEBI" id="CHEBI:58017"/>
    </ligand>
</feature>
<feature type="binding site" evidence="1">
    <location>
        <position position="80"/>
    </location>
    <ligand>
        <name>anthranilate</name>
        <dbReference type="ChEBI" id="CHEBI:16567"/>
        <label>1</label>
    </ligand>
</feature>
<feature type="binding site" evidence="1">
    <location>
        <begin position="83"/>
        <end position="84"/>
    </location>
    <ligand>
        <name>5-phospho-alpha-D-ribose 1-diphosphate</name>
        <dbReference type="ChEBI" id="CHEBI:58017"/>
    </ligand>
</feature>
<feature type="binding site" evidence="1">
    <location>
        <position position="88"/>
    </location>
    <ligand>
        <name>5-phospho-alpha-D-ribose 1-diphosphate</name>
        <dbReference type="ChEBI" id="CHEBI:58017"/>
    </ligand>
</feature>
<feature type="binding site" evidence="1">
    <location>
        <begin position="90"/>
        <end position="93"/>
    </location>
    <ligand>
        <name>5-phospho-alpha-D-ribose 1-diphosphate</name>
        <dbReference type="ChEBI" id="CHEBI:58017"/>
    </ligand>
</feature>
<feature type="binding site" evidence="1">
    <location>
        <position position="92"/>
    </location>
    <ligand>
        <name>Mg(2+)</name>
        <dbReference type="ChEBI" id="CHEBI:18420"/>
        <label>1</label>
    </ligand>
</feature>
<feature type="binding site" evidence="1">
    <location>
        <begin position="108"/>
        <end position="116"/>
    </location>
    <ligand>
        <name>5-phospho-alpha-D-ribose 1-diphosphate</name>
        <dbReference type="ChEBI" id="CHEBI:58017"/>
    </ligand>
</feature>
<feature type="binding site" evidence="1">
    <location>
        <position position="111"/>
    </location>
    <ligand>
        <name>anthranilate</name>
        <dbReference type="ChEBI" id="CHEBI:16567"/>
        <label>1</label>
    </ligand>
</feature>
<feature type="binding site" evidence="1">
    <location>
        <position position="120"/>
    </location>
    <ligand>
        <name>5-phospho-alpha-D-ribose 1-diphosphate</name>
        <dbReference type="ChEBI" id="CHEBI:58017"/>
    </ligand>
</feature>
<feature type="binding site" evidence="1">
    <location>
        <position position="166"/>
    </location>
    <ligand>
        <name>anthranilate</name>
        <dbReference type="ChEBI" id="CHEBI:16567"/>
        <label>2</label>
    </ligand>
</feature>
<feature type="binding site" evidence="1">
    <location>
        <position position="225"/>
    </location>
    <ligand>
        <name>Mg(2+)</name>
        <dbReference type="ChEBI" id="CHEBI:18420"/>
        <label>2</label>
    </ligand>
</feature>
<feature type="binding site" evidence="1">
    <location>
        <position position="226"/>
    </location>
    <ligand>
        <name>Mg(2+)</name>
        <dbReference type="ChEBI" id="CHEBI:18420"/>
        <label>1</label>
    </ligand>
</feature>
<feature type="binding site" evidence="1">
    <location>
        <position position="226"/>
    </location>
    <ligand>
        <name>Mg(2+)</name>
        <dbReference type="ChEBI" id="CHEBI:18420"/>
        <label>2</label>
    </ligand>
</feature>
<protein>
    <recommendedName>
        <fullName evidence="1">Anthranilate phosphoribosyltransferase</fullName>
        <ecNumber evidence="1">2.4.2.18</ecNumber>
    </recommendedName>
</protein>
<accession>Q5WY74</accession>
<comment type="function">
    <text evidence="1">Catalyzes the transfer of the phosphoribosyl group of 5-phosphorylribose-1-pyrophosphate (PRPP) to anthranilate to yield N-(5'-phosphoribosyl)-anthranilate (PRA).</text>
</comment>
<comment type="catalytic activity">
    <reaction evidence="1">
        <text>N-(5-phospho-beta-D-ribosyl)anthranilate + diphosphate = 5-phospho-alpha-D-ribose 1-diphosphate + anthranilate</text>
        <dbReference type="Rhea" id="RHEA:11768"/>
        <dbReference type="ChEBI" id="CHEBI:16567"/>
        <dbReference type="ChEBI" id="CHEBI:18277"/>
        <dbReference type="ChEBI" id="CHEBI:33019"/>
        <dbReference type="ChEBI" id="CHEBI:58017"/>
        <dbReference type="EC" id="2.4.2.18"/>
    </reaction>
</comment>
<comment type="cofactor">
    <cofactor evidence="1">
        <name>Mg(2+)</name>
        <dbReference type="ChEBI" id="CHEBI:18420"/>
    </cofactor>
    <text evidence="1">Binds 2 magnesium ions per monomer.</text>
</comment>
<comment type="pathway">
    <text evidence="1">Amino-acid biosynthesis; L-tryptophan biosynthesis; L-tryptophan from chorismate: step 2/5.</text>
</comment>
<comment type="subunit">
    <text evidence="1">Homodimer.</text>
</comment>
<comment type="similarity">
    <text evidence="1">Belongs to the anthranilate phosphoribosyltransferase family.</text>
</comment>
<sequence length="344" mass="37426">MKPKFLFEQLLSRQDLSSDQMQEVIHACMTGEFSDVQIATFLALMRMKGETVNELTAAAKVMRQLAHKIDLGNPLIDIVGTGGDGRNTFNVSTACSFVVAAAGIKVAKHGNRSVSSRSGSADLLEQAGFILNLSDSQVQNCINQCQLAFLFAPHYHPAMQHARAARQQLGIRTLFNLLGPLINPAQVKRQVVGVFSTNWLKTIATVLANLGSERSLVISSQDGLDEISIAAKSEVVEYRDGNFKQWFISPEDYGLKHSSLDAIIVDSPEQSLHLIQSVLSGDSGPARDIVLLNSAAAIYCAKDGISFDAAIEEARIAIDNGKANLCFNKLRLLTQTLNKESNHE</sequence>
<proteinExistence type="inferred from homology"/>
<gene>
    <name evidence="1" type="primary">trpD</name>
    <name type="ordered locus">lpl0865</name>
</gene>